<dbReference type="EC" id="3.2.1.8" evidence="4 12"/>
<dbReference type="EMBL" id="X69573">
    <property type="protein sequence ID" value="CAA49293.1"/>
    <property type="status" value="ALT_FRAME"/>
    <property type="molecule type" value="Genomic_DNA"/>
</dbReference>
<dbReference type="EMBL" id="EU532196">
    <property type="protein sequence ID" value="ACB38137.1"/>
    <property type="molecule type" value="mRNA"/>
</dbReference>
<dbReference type="EMBL" id="KI911164">
    <property type="protein sequence ID" value="ETR98242.1"/>
    <property type="molecule type" value="Genomic_DNA"/>
</dbReference>
<dbReference type="PIR" id="S39154">
    <property type="entry name" value="S39154"/>
</dbReference>
<dbReference type="PDB" id="1ENX">
    <property type="method" value="X-ray"/>
    <property type="resolution" value="1.50 A"/>
    <property type="chains" value="A/B=35-223"/>
</dbReference>
<dbReference type="PDB" id="1RED">
    <property type="method" value="X-ray"/>
    <property type="resolution" value="1.60 A"/>
    <property type="chains" value="A/B=35-223"/>
</dbReference>
<dbReference type="PDB" id="1REE">
    <property type="method" value="X-ray"/>
    <property type="resolution" value="1.60 A"/>
    <property type="chains" value="A/B=35-223"/>
</dbReference>
<dbReference type="PDB" id="1REF">
    <property type="method" value="X-ray"/>
    <property type="resolution" value="1.80 A"/>
    <property type="chains" value="A/B=35-223"/>
</dbReference>
<dbReference type="PDB" id="1XYO">
    <property type="method" value="X-ray"/>
    <property type="resolution" value="1.50 A"/>
    <property type="chains" value="A/B=35-223"/>
</dbReference>
<dbReference type="PDB" id="1XYP">
    <property type="method" value="X-ray"/>
    <property type="resolution" value="1.50 A"/>
    <property type="chains" value="A/B=35-223"/>
</dbReference>
<dbReference type="PDB" id="2D97">
    <property type="method" value="X-ray"/>
    <property type="resolution" value="2.01 A"/>
    <property type="chains" value="A=35-223"/>
</dbReference>
<dbReference type="PDB" id="2D98">
    <property type="method" value="X-ray"/>
    <property type="resolution" value="2.00 A"/>
    <property type="chains" value="A=35-223"/>
</dbReference>
<dbReference type="PDB" id="2DFB">
    <property type="method" value="X-ray"/>
    <property type="resolution" value="1.11 A"/>
    <property type="chains" value="A=34-223"/>
</dbReference>
<dbReference type="PDB" id="2DFC">
    <property type="method" value="X-ray"/>
    <property type="resolution" value="1.19 A"/>
    <property type="chains" value="A=34-223"/>
</dbReference>
<dbReference type="PDB" id="3LGR">
    <property type="method" value="X-ray"/>
    <property type="resolution" value="1.64 A"/>
    <property type="chains" value="A=35-223"/>
</dbReference>
<dbReference type="PDB" id="4HK8">
    <property type="method" value="X-ray"/>
    <property type="resolution" value="1.15 A"/>
    <property type="chains" value="A=35-223"/>
</dbReference>
<dbReference type="PDB" id="4HK9">
    <property type="method" value="X-ray"/>
    <property type="resolution" value="1.55 A"/>
    <property type="chains" value="A=36-223"/>
</dbReference>
<dbReference type="PDB" id="4HKL">
    <property type="method" value="X-ray"/>
    <property type="resolution" value="1.10 A"/>
    <property type="chains" value="A=35-223"/>
</dbReference>
<dbReference type="PDB" id="4HKO">
    <property type="method" value="X-ray"/>
    <property type="resolution" value="1.50 A"/>
    <property type="chains" value="A=35-223"/>
</dbReference>
<dbReference type="PDB" id="4HKW">
    <property type="method" value="X-ray"/>
    <property type="resolution" value="1.65 A"/>
    <property type="chains" value="A=35-223"/>
</dbReference>
<dbReference type="PDB" id="4S2D">
    <property type="method" value="Other"/>
    <property type="resolution" value="1.60 A"/>
    <property type="chains" value="A=35-223"/>
</dbReference>
<dbReference type="PDB" id="4S2F">
    <property type="method" value="Other"/>
    <property type="resolution" value="1.70 A"/>
    <property type="chains" value="A=35-223"/>
</dbReference>
<dbReference type="PDB" id="4S2G">
    <property type="method" value="Other"/>
    <property type="resolution" value="1.60 A"/>
    <property type="chains" value="A=35-223"/>
</dbReference>
<dbReference type="PDB" id="4S2H">
    <property type="method" value="Other"/>
    <property type="resolution" value="1.60 A"/>
    <property type="chains" value="A=35-223"/>
</dbReference>
<dbReference type="PDB" id="4XPV">
    <property type="method" value="Other"/>
    <property type="resolution" value="1.70 A"/>
    <property type="chains" value="A=35-223"/>
</dbReference>
<dbReference type="PDB" id="4XQ4">
    <property type="method" value="X-ray"/>
    <property type="resolution" value="1.25 A"/>
    <property type="chains" value="A/B=35-223"/>
</dbReference>
<dbReference type="PDB" id="4XQD">
    <property type="method" value="X-ray"/>
    <property type="resolution" value="1.50 A"/>
    <property type="chains" value="A/B=35-223"/>
</dbReference>
<dbReference type="PDB" id="4XQW">
    <property type="method" value="X-ray"/>
    <property type="resolution" value="1.50 A"/>
    <property type="chains" value="A=35-223"/>
</dbReference>
<dbReference type="PDB" id="5K7P">
    <property type="method" value="EM"/>
    <property type="resolution" value="2.30 A"/>
    <property type="chains" value="A=34-223"/>
</dbReference>
<dbReference type="PDB" id="5ZF3">
    <property type="method" value="X-ray"/>
    <property type="resolution" value="1.20 A"/>
    <property type="chains" value="A=35-223"/>
</dbReference>
<dbReference type="PDB" id="5ZH0">
    <property type="method" value="X-ray"/>
    <property type="resolution" value="1.08 A"/>
    <property type="chains" value="A=35-223"/>
</dbReference>
<dbReference type="PDB" id="5ZH9">
    <property type="method" value="X-ray"/>
    <property type="resolution" value="1.15 A"/>
    <property type="chains" value="A=35-223"/>
</dbReference>
<dbReference type="PDB" id="5ZII">
    <property type="method" value="X-ray"/>
    <property type="resolution" value="1.30 A"/>
    <property type="chains" value="A=35-223"/>
</dbReference>
<dbReference type="PDB" id="5ZIW">
    <property type="method" value="X-ray"/>
    <property type="resolution" value="1.30 A"/>
    <property type="chains" value="A=35-223"/>
</dbReference>
<dbReference type="PDB" id="5ZKZ">
    <property type="method" value="X-ray"/>
    <property type="resolution" value="1.30 A"/>
    <property type="chains" value="A=35-223"/>
</dbReference>
<dbReference type="PDB" id="5ZO0">
    <property type="method" value="Neutron"/>
    <property type="resolution" value="1.65 A"/>
    <property type="chains" value="A=35-223"/>
</dbReference>
<dbReference type="PDB" id="6JUG">
    <property type="method" value="X-ray"/>
    <property type="resolution" value="1.19 A"/>
    <property type="chains" value="A=35-223"/>
</dbReference>
<dbReference type="PDB" id="6JWB">
    <property type="method" value="X-ray"/>
    <property type="resolution" value="1.15 A"/>
    <property type="chains" value="A=35-223"/>
</dbReference>
<dbReference type="PDB" id="6JXL">
    <property type="method" value="X-ray"/>
    <property type="resolution" value="1.30 A"/>
    <property type="chains" value="A=35-223"/>
</dbReference>
<dbReference type="PDB" id="6JZP">
    <property type="method" value="X-ray"/>
    <property type="resolution" value="1.12 A"/>
    <property type="chains" value="A=35-223"/>
</dbReference>
<dbReference type="PDB" id="6K9O">
    <property type="method" value="X-ray"/>
    <property type="resolution" value="1.06 A"/>
    <property type="chains" value="A=35-223"/>
</dbReference>
<dbReference type="PDB" id="6K9R">
    <property type="method" value="X-ray"/>
    <property type="resolution" value="1.30 A"/>
    <property type="chains" value="A=35-223"/>
</dbReference>
<dbReference type="PDB" id="6K9W">
    <property type="method" value="X-ray"/>
    <property type="resolution" value="1.10 A"/>
    <property type="chains" value="A=35-223"/>
</dbReference>
<dbReference type="PDB" id="6K9X">
    <property type="method" value="X-ray"/>
    <property type="resolution" value="1.20 A"/>
    <property type="chains" value="A=35-223"/>
</dbReference>
<dbReference type="PDB" id="6KVV">
    <property type="method" value="X-ray"/>
    <property type="resolution" value="1.19 A"/>
    <property type="chains" value="A=35-223"/>
</dbReference>
<dbReference type="PDB" id="6KW9">
    <property type="method" value="X-ray"/>
    <property type="resolution" value="1.22 A"/>
    <property type="chains" value="A=35-223"/>
</dbReference>
<dbReference type="PDB" id="6KWC">
    <property type="method" value="X-ray"/>
    <property type="resolution" value="1.30 A"/>
    <property type="chains" value="A=35-223"/>
</dbReference>
<dbReference type="PDB" id="6KWD">
    <property type="method" value="X-ray"/>
    <property type="resolution" value="1.30 A"/>
    <property type="chains" value="A=35-223"/>
</dbReference>
<dbReference type="PDB" id="6KWE">
    <property type="method" value="X-ray"/>
    <property type="resolution" value="1.50 A"/>
    <property type="chains" value="A=35-223"/>
</dbReference>
<dbReference type="PDB" id="6KWF">
    <property type="method" value="X-ray"/>
    <property type="resolution" value="1.22 A"/>
    <property type="chains" value="A=35-223"/>
</dbReference>
<dbReference type="PDB" id="6KWG">
    <property type="method" value="X-ray"/>
    <property type="resolution" value="1.69 A"/>
    <property type="chains" value="A=35-223"/>
</dbReference>
<dbReference type="PDB" id="6KWH">
    <property type="method" value="X-ray"/>
    <property type="resolution" value="1.81 A"/>
    <property type="chains" value="A=35-223"/>
</dbReference>
<dbReference type="PDB" id="7MGU">
    <property type="method" value="X-ray"/>
    <property type="resolution" value="1.40 A"/>
    <property type="chains" value="A=34-223"/>
</dbReference>
<dbReference type="PDBsum" id="1ENX"/>
<dbReference type="PDBsum" id="1RED"/>
<dbReference type="PDBsum" id="1REE"/>
<dbReference type="PDBsum" id="1REF"/>
<dbReference type="PDBsum" id="1XYO"/>
<dbReference type="PDBsum" id="1XYP"/>
<dbReference type="PDBsum" id="2D97"/>
<dbReference type="PDBsum" id="2D98"/>
<dbReference type="PDBsum" id="2DFB"/>
<dbReference type="PDBsum" id="2DFC"/>
<dbReference type="PDBsum" id="3LGR"/>
<dbReference type="PDBsum" id="4HK8"/>
<dbReference type="PDBsum" id="4HK9"/>
<dbReference type="PDBsum" id="4HKL"/>
<dbReference type="PDBsum" id="4HKO"/>
<dbReference type="PDBsum" id="4HKW"/>
<dbReference type="PDBsum" id="4S2D"/>
<dbReference type="PDBsum" id="4S2F"/>
<dbReference type="PDBsum" id="4S2G"/>
<dbReference type="PDBsum" id="4S2H"/>
<dbReference type="PDBsum" id="4XPV"/>
<dbReference type="PDBsum" id="4XQ4"/>
<dbReference type="PDBsum" id="4XQD"/>
<dbReference type="PDBsum" id="4XQW"/>
<dbReference type="PDBsum" id="5K7P"/>
<dbReference type="PDBsum" id="5ZF3"/>
<dbReference type="PDBsum" id="5ZH0"/>
<dbReference type="PDBsum" id="5ZH9"/>
<dbReference type="PDBsum" id="5ZII"/>
<dbReference type="PDBsum" id="5ZIW"/>
<dbReference type="PDBsum" id="5ZKZ"/>
<dbReference type="PDBsum" id="5ZO0"/>
<dbReference type="PDBsum" id="6JUG"/>
<dbReference type="PDBsum" id="6JWB"/>
<dbReference type="PDBsum" id="6JXL"/>
<dbReference type="PDBsum" id="6JZP"/>
<dbReference type="PDBsum" id="6K9O"/>
<dbReference type="PDBsum" id="6K9R"/>
<dbReference type="PDBsum" id="6K9W"/>
<dbReference type="PDBsum" id="6K9X"/>
<dbReference type="PDBsum" id="6KVV"/>
<dbReference type="PDBsum" id="6KW9"/>
<dbReference type="PDBsum" id="6KWC"/>
<dbReference type="PDBsum" id="6KWD"/>
<dbReference type="PDBsum" id="6KWE"/>
<dbReference type="PDBsum" id="6KWF"/>
<dbReference type="PDBsum" id="6KWG"/>
<dbReference type="PDBsum" id="6KWH"/>
<dbReference type="PDBsum" id="7MGU"/>
<dbReference type="EMDB" id="EMD-8218"/>
<dbReference type="SMR" id="P36217"/>
<dbReference type="CAZy" id="GH11">
    <property type="family name" value="Glycoside Hydrolase Family 11"/>
</dbReference>
<dbReference type="GlyCosmos" id="P36217">
    <property type="glycosylation" value="2 sites, No reported glycans"/>
</dbReference>
<dbReference type="KEGG" id="trr:M419DRAFT_124931"/>
<dbReference type="OrthoDB" id="6644at5129"/>
<dbReference type="BRENDA" id="3.2.1.8">
    <property type="organism ID" value="6451"/>
</dbReference>
<dbReference type="UniPathway" id="UPA00114"/>
<dbReference type="EvolutionaryTrace" id="P36217"/>
<dbReference type="Proteomes" id="UP000024376">
    <property type="component" value="Unassembled WGS sequence"/>
</dbReference>
<dbReference type="GO" id="GO:0005576">
    <property type="term" value="C:extracellular region"/>
    <property type="evidence" value="ECO:0007669"/>
    <property type="project" value="UniProtKB-SubCell"/>
</dbReference>
<dbReference type="GO" id="GO:0031176">
    <property type="term" value="F:endo-1,4-beta-xylanase activity"/>
    <property type="evidence" value="ECO:0007669"/>
    <property type="project" value="UniProtKB-EC"/>
</dbReference>
<dbReference type="GO" id="GO:0045493">
    <property type="term" value="P:xylan catabolic process"/>
    <property type="evidence" value="ECO:0007669"/>
    <property type="project" value="UniProtKB-UniPathway"/>
</dbReference>
<dbReference type="FunFam" id="2.60.120.180:FF:000001">
    <property type="entry name" value="Endo-1,4-beta-xylanase"/>
    <property type="match status" value="1"/>
</dbReference>
<dbReference type="Gene3D" id="2.60.120.180">
    <property type="match status" value="1"/>
</dbReference>
<dbReference type="InterPro" id="IPR013320">
    <property type="entry name" value="ConA-like_dom_sf"/>
</dbReference>
<dbReference type="InterPro" id="IPR013319">
    <property type="entry name" value="GH11/12"/>
</dbReference>
<dbReference type="InterPro" id="IPR018208">
    <property type="entry name" value="GH11_AS_1"/>
</dbReference>
<dbReference type="InterPro" id="IPR033119">
    <property type="entry name" value="GH11_AS_2"/>
</dbReference>
<dbReference type="InterPro" id="IPR033123">
    <property type="entry name" value="GH11_dom"/>
</dbReference>
<dbReference type="InterPro" id="IPR001137">
    <property type="entry name" value="Glyco_hydro_11"/>
</dbReference>
<dbReference type="PANTHER" id="PTHR46828:SF3">
    <property type="entry name" value="ENDO-1,4-BETA-XYLANASE"/>
    <property type="match status" value="1"/>
</dbReference>
<dbReference type="PANTHER" id="PTHR46828">
    <property type="entry name" value="ENDO-1,4-BETA-XYLANASE A-RELATED"/>
    <property type="match status" value="1"/>
</dbReference>
<dbReference type="Pfam" id="PF00457">
    <property type="entry name" value="Glyco_hydro_11"/>
    <property type="match status" value="1"/>
</dbReference>
<dbReference type="PRINTS" id="PR00911">
    <property type="entry name" value="GLHYDRLASE11"/>
</dbReference>
<dbReference type="SUPFAM" id="SSF49899">
    <property type="entry name" value="Concanavalin A-like lectins/glucanases"/>
    <property type="match status" value="1"/>
</dbReference>
<dbReference type="PROSITE" id="PS00776">
    <property type="entry name" value="GH11_1"/>
    <property type="match status" value="1"/>
</dbReference>
<dbReference type="PROSITE" id="PS00777">
    <property type="entry name" value="GH11_2"/>
    <property type="match status" value="1"/>
</dbReference>
<dbReference type="PROSITE" id="PS51761">
    <property type="entry name" value="GH11_3"/>
    <property type="match status" value="1"/>
</dbReference>
<keyword id="KW-0002">3D-structure</keyword>
<keyword id="KW-0119">Carbohydrate metabolism</keyword>
<keyword id="KW-0903">Direct protein sequencing</keyword>
<keyword id="KW-0325">Glycoprotein</keyword>
<keyword id="KW-0326">Glycosidase</keyword>
<keyword id="KW-0378">Hydrolase</keyword>
<keyword id="KW-0624">Polysaccharide degradation</keyword>
<keyword id="KW-0873">Pyrrolidone carboxylic acid</keyword>
<keyword id="KW-0964">Secreted</keyword>
<keyword id="KW-0732">Signal</keyword>
<keyword id="KW-0858">Xylan degradation</keyword>
<organism>
    <name type="scientific">Hypocrea jecorina (strain ATCC 56765 / BCRC 32924 / NRRL 11460 / Rut C-30)</name>
    <name type="common">Trichoderma reesei</name>
    <dbReference type="NCBI Taxonomy" id="1344414"/>
    <lineage>
        <taxon>Eukaryota</taxon>
        <taxon>Fungi</taxon>
        <taxon>Dikarya</taxon>
        <taxon>Ascomycota</taxon>
        <taxon>Pezizomycotina</taxon>
        <taxon>Sordariomycetes</taxon>
        <taxon>Hypocreomycetidae</taxon>
        <taxon>Hypocreales</taxon>
        <taxon>Hypocreaceae</taxon>
        <taxon>Trichoderma</taxon>
    </lineage>
</organism>
<accession>P36217</accession>
<accession>A0A024RZG2</accession>
<accession>B2CNY5</accession>
<sequence length="223" mass="24069">MVSFTSLLAGVAAISGVLAAPAAEVESVAVEKRQTIQPGTGYNNGYFYSYWNDGHGGVTYTNGPGGQFSVNWSNSGNFVGGKGWQPGTKNKVINFSGSYNPNGNSYLSVYGWSRNPLIEYYIVENFGTYNPSTGATKLGEVTSDGSVYDIYRTQRVNQPSIIGTATFYQYWSVRRNHRSSGSVNTANHFNAWAQQGLTLGTMDYQIVAVEGYFSSGSASITVS</sequence>
<protein>
    <recommendedName>
        <fullName evidence="13">Endo-1,4-beta-xylanase 2</fullName>
        <shortName evidence="14">EX 2</shortName>
        <shortName evidence="15">Xylanase 2</shortName>
        <ecNumber evidence="4 12">3.2.1.8</ecNumber>
    </recommendedName>
    <alternativeName>
        <fullName evidence="13">1,4-beta-D-xylan xylanohydrolase 2</fullName>
    </alternativeName>
    <alternativeName>
        <fullName evidence="14">Alkaline endo-beta-1,4-xylanase</fullName>
    </alternativeName>
</protein>
<name>XYN2_HYPJR</name>
<comment type="function">
    <text evidence="4 8 11 12">Glycoside hydrolase involved in the hydrolysis of xylan, a major plant cell wall hemicellulose made up of 1,4-beta-linked D-xylopyranose residues. Catalyzes the endohydrolysis of the main-chain 1,4-beta-glycosidic bonds connecting the xylose subunits yielding various xylooligosaccharides and xylose (PubMed:1369024, Ref.5). The catalysis proceeds by a double-displacement reaction mechanism with a putative covalent glycosyl-enzyme intermediate, with retention of the anomeric configuration (PubMed:7988708). Produces xylobiose and xylose as the main degradation products (PubMed:19556747).</text>
</comment>
<comment type="catalytic activity">
    <reaction evidence="4 12">
        <text>Endohydrolysis of (1-&gt;4)-beta-D-xylosidic linkages in xylans.</text>
        <dbReference type="EC" id="3.2.1.8"/>
    </reaction>
</comment>
<comment type="biophysicochemical properties">
    <kinetics>
        <KM evidence="4">0.14 mg/ml for beechwood (unsubstituted) xylan</KM>
        <KM evidence="6">13.8 mg/ml for birchwood xylan</KM>
        <KM evidence="12">3 mg/ml for acetylated glucuronoxylan</KM>
        <KM evidence="12">3.8 mg/ml for deacetylated glucuronoxylan</KM>
        <KM evidence="12">6.8 mg/ml for unsubstituted xylan</KM>
        <KM evidence="7">73 uM for xylohexaose</KM>
        <KM evidence="7">136 uM for xylopentaose</KM>
        <Vmax evidence="4">1600.0 umol/min/mg enzyme for beechwood xylan</Vmax>
        <Vmax evidence="6">336.0 umol/min/mg enzyme for birchwood xylan</Vmax>
        <text evidence="7">kcat is 68 sec(-1) with xylohexaose, 50.3 sec(-1) with xylopentaose, 0.162 sec(-1) with xylotetraose and 0.045 sec(-1) with xylotriose as substrate.</text>
    </kinetics>
    <phDependence>
        <text evidence="4 12">Optimum pH is 4.5-5.5 (PubMed:1369024). Stable from pH 3.0 to 8.5 at room temperature and from pH 4.0 to 7.5 at 40 degrees Celsius (Ref.5).</text>
    </phDependence>
</comment>
<comment type="pathway">
    <text evidence="3">Glycan degradation; xylan degradation.</text>
</comment>
<comment type="subcellular location">
    <subcellularLocation>
        <location evidence="12">Secreted</location>
    </subcellularLocation>
</comment>
<comment type="induction">
    <text evidence="1">Induced by D-xylose, dependent on the cellulase and xylanase regulator xyr1. Repressed by glucose through negative regulation by the crabon catabolite repressor cre1.</text>
</comment>
<comment type="similarity">
    <text evidence="16">Belongs to the glycosyl hydrolase 11 (cellulase G) family.</text>
</comment>
<comment type="caution">
    <text evidence="17">In PubMed:1369024 Figure 2, this sequence is erroneously labeled xyn1, but in the remainder of the paper and all subsequent publications, this protein is referred to as xylanase 2 (xyn2).</text>
</comment>
<comment type="sequence caution" evidence="16">
    <conflict type="frameshift">
        <sequence resource="EMBL-CDS" id="CAA49293"/>
    </conflict>
</comment>
<proteinExistence type="evidence at protein level"/>
<feature type="signal peptide" evidence="2">
    <location>
        <begin position="1"/>
        <end position="19"/>
    </location>
</feature>
<feature type="propeptide" id="PRO_0000436702" evidence="4">
    <location>
        <begin position="20"/>
        <end position="33"/>
    </location>
</feature>
<feature type="chain" id="PRO_0000008014" description="Endo-1,4-beta-xylanase 2">
    <location>
        <begin position="34"/>
        <end position="223"/>
    </location>
</feature>
<feature type="domain" description="GH11" evidence="3">
    <location>
        <begin position="34"/>
        <end position="222"/>
    </location>
</feature>
<feature type="active site" description="Nucleophile" evidence="10 18">
    <location>
        <position position="119"/>
    </location>
</feature>
<feature type="active site" description="Proton donor" evidence="10 18">
    <location>
        <position position="210"/>
    </location>
</feature>
<feature type="binding site" evidence="9">
    <location>
        <position position="106"/>
    </location>
    <ligand>
        <name>substrate</name>
    </ligand>
</feature>
<feature type="binding site" evidence="9">
    <location>
        <position position="110"/>
    </location>
    <ligand>
        <name>substrate</name>
    </ligand>
</feature>
<feature type="binding site" evidence="9">
    <location>
        <position position="121"/>
    </location>
    <ligand>
        <name>substrate</name>
    </ligand>
</feature>
<feature type="binding site" evidence="9">
    <location>
        <position position="155"/>
    </location>
    <ligand>
        <name>substrate</name>
    </ligand>
</feature>
<feature type="binding site" evidence="9">
    <location>
        <position position="159"/>
    </location>
    <ligand>
        <name>substrate</name>
    </ligand>
</feature>
<feature type="binding site" evidence="9">
    <location>
        <position position="169"/>
    </location>
    <ligand>
        <name>substrate</name>
    </ligand>
</feature>
<feature type="binding site" evidence="9">
    <location>
        <position position="204"/>
    </location>
    <ligand>
        <name>substrate</name>
    </ligand>
</feature>
<feature type="modified residue" description="Pyrrolidone carboxylic acid" evidence="4 5">
    <location>
        <position position="34"/>
    </location>
</feature>
<feature type="glycosylation site" description="N-linked (GlcNAc...) asparagine" evidence="2">
    <location>
        <position position="71"/>
    </location>
</feature>
<feature type="glycosylation site" description="N-linked (GlcNAc...) asparagine" evidence="2">
    <location>
        <position position="94"/>
    </location>
</feature>
<feature type="sequence conflict" description="In Ref. 2; no nucleotide entry." evidence="16" ref="2">
    <original>A</original>
    <variation>V</variation>
    <location>
        <position position="191"/>
    </location>
</feature>
<feature type="strand" evidence="19">
    <location>
        <begin position="38"/>
        <end position="43"/>
    </location>
</feature>
<feature type="strand" evidence="19">
    <location>
        <begin position="46"/>
        <end position="52"/>
    </location>
</feature>
<feature type="strand" evidence="19">
    <location>
        <begin position="58"/>
        <end position="62"/>
    </location>
</feature>
<feature type="strand" evidence="19">
    <location>
        <begin position="67"/>
        <end position="74"/>
    </location>
</feature>
<feature type="strand" evidence="19">
    <location>
        <begin position="77"/>
        <end position="86"/>
    </location>
</feature>
<feature type="strand" evidence="19">
    <location>
        <begin position="92"/>
        <end position="114"/>
    </location>
</feature>
<feature type="turn" evidence="19">
    <location>
        <begin position="115"/>
        <end position="117"/>
    </location>
</feature>
<feature type="strand" evidence="19">
    <location>
        <begin position="118"/>
        <end position="128"/>
    </location>
</feature>
<feature type="turn" evidence="19">
    <location>
        <begin position="131"/>
        <end position="134"/>
    </location>
</feature>
<feature type="strand" evidence="19">
    <location>
        <begin position="136"/>
        <end position="143"/>
    </location>
</feature>
<feature type="strand" evidence="19">
    <location>
        <begin position="146"/>
        <end position="158"/>
    </location>
</feature>
<feature type="strand" evidence="19">
    <location>
        <begin position="163"/>
        <end position="176"/>
    </location>
</feature>
<feature type="strand" evidence="19">
    <location>
        <begin position="179"/>
        <end position="184"/>
    </location>
</feature>
<feature type="helix" evidence="19">
    <location>
        <begin position="185"/>
        <end position="194"/>
    </location>
</feature>
<feature type="strand" evidence="19">
    <location>
        <begin position="201"/>
        <end position="213"/>
    </location>
</feature>
<feature type="strand" evidence="19">
    <location>
        <begin position="215"/>
        <end position="223"/>
    </location>
</feature>
<evidence type="ECO:0000250" key="1">
    <source>
        <dbReference type="UniProtKB" id="G0RUP7"/>
    </source>
</evidence>
<evidence type="ECO:0000255" key="2"/>
<evidence type="ECO:0000255" key="3">
    <source>
        <dbReference type="PROSITE-ProRule" id="PRU01097"/>
    </source>
</evidence>
<evidence type="ECO:0000269" key="4">
    <source>
    </source>
</evidence>
<evidence type="ECO:0000269" key="5">
    <source>
    </source>
</evidence>
<evidence type="ECO:0000269" key="6">
    <source>
    </source>
</evidence>
<evidence type="ECO:0000269" key="7">
    <source>
    </source>
</evidence>
<evidence type="ECO:0000269" key="8">
    <source>
    </source>
</evidence>
<evidence type="ECO:0000269" key="9">
    <source>
    </source>
</evidence>
<evidence type="ECO:0000269" key="10">
    <source>
    </source>
</evidence>
<evidence type="ECO:0000269" key="11">
    <source>
    </source>
</evidence>
<evidence type="ECO:0000269" key="12">
    <source ref="5"/>
</evidence>
<evidence type="ECO:0000303" key="13">
    <source>
    </source>
</evidence>
<evidence type="ECO:0000303" key="14">
    <source>
    </source>
</evidence>
<evidence type="ECO:0000303" key="15">
    <source ref="5"/>
</evidence>
<evidence type="ECO:0000305" key="16"/>
<evidence type="ECO:0000305" key="17">
    <source>
    </source>
</evidence>
<evidence type="ECO:0000305" key="18">
    <source>
    </source>
</evidence>
<evidence type="ECO:0007829" key="19">
    <source>
        <dbReference type="PDB" id="6K9O"/>
    </source>
</evidence>
<reference key="1">
    <citation type="journal article" date="1992" name="Biotechnology (N.Y.)">
        <title>The two major xylanases from Trichoderma reesei: characterization of both enzymes and genes.</title>
        <authorList>
            <person name="Toerroenen A."/>
            <person name="Mach R.L."/>
            <person name="Messner R."/>
            <person name="Gonzalez R."/>
            <person name="Kalkkinen N."/>
            <person name="Harkki A."/>
            <person name="Kubicek C.P."/>
        </authorList>
    </citation>
    <scope>NUCLEOTIDE SEQUENCE [GENOMIC DNA]</scope>
    <scope>PROTEIN SEQUENCE OF 34-42; 49-60; 83-89; 120-152; 168-171; 205-211 AND 213-217</scope>
    <scope>PYROGLUTAMATE FORMATION AT GLN-34</scope>
    <scope>CATALYTIC ACTIVITY</scope>
    <scope>BIOPHYSICOCHEMICAL PROPERTIES</scope>
    <source>
        <strain>ATCC 56765 / BCRC 32924 / NRRL 11460 / Rut C-30</strain>
    </source>
</reference>
<reference key="2">
    <citation type="journal article" date="2007" name="Appl. Biochem. Biotechnol.">
        <title>Biochemical properties of genetic recombinant xylanase II.</title>
        <authorList>
            <person name="Tung M.Y."/>
            <person name="Chang C.T."/>
            <person name="Chung Y.C."/>
        </authorList>
    </citation>
    <scope>NUCLEOTIDE SEQUENCE [MRNA]</scope>
    <scope>BIOPHYSICOCHEMICAL PROPERTIES</scope>
    <source>
        <strain>ATCC 56765 / BCRC 32924 / NRRL 11460 / Rut C-30</strain>
    </source>
</reference>
<reference key="3">
    <citation type="journal article" date="2013" name="Ind. Biotechnol.">
        <title>Comparative genomics analysis of Trichoderma reesei strains.</title>
        <authorList>
            <person name="Koike H."/>
            <person name="Aerts A."/>
            <person name="LaButti K."/>
            <person name="Grigoriev I.V."/>
            <person name="Baker S.E."/>
        </authorList>
    </citation>
    <scope>NUCLEOTIDE SEQUENCE [LARGE SCALE GENOMIC DNA]</scope>
    <source>
        <strain>ATCC 56765 / BCRC 32924 / NRRL 11460 / Rut C-30</strain>
    </source>
</reference>
<reference key="4">
    <citation type="journal article" date="2009" name="J. Mol. Microbiol. Biotechnol.">
        <title>Sequencing and expression of the xylanase gene 2 from Trichoderma reesei Rut C-30 and characterization of the recombinant enzyme and its activity on xylan.</title>
        <authorList>
            <person name="He J."/>
            <person name="Yu B."/>
            <person name="Zhang K."/>
            <person name="Ding X."/>
            <person name="Chen D."/>
        </authorList>
    </citation>
    <scope>NUCLEOTIDE SEQUENCE [MRNA] OF 34-223</scope>
    <scope>FUNCTION</scope>
    <source>
        <strain>ATCC 56765 / BCRC 32924 / NRRL 11460 / Rut C-30</strain>
    </source>
</reference>
<reference key="5">
    <citation type="journal article" date="1992" name="Enzyme Microb. Technol.">
        <title>Two major xylanases of Trichoderma reesei.</title>
        <authorList>
            <person name="Tenkanen M."/>
            <person name="Puls J."/>
            <person name="Poutanen K."/>
        </authorList>
    </citation>
    <scope>CATALYTIC ACTIVITY</scope>
    <scope>BIOPHYSICOCHEMICAL PROPERTIES</scope>
    <scope>SUBCELLULAR LOCATION</scope>
    <source>
        <strain>ATCC 56765 / BCRC 32924 / NRRL 11460 / Rut C-30</strain>
    </source>
</reference>
<reference key="6">
    <citation type="journal article" date="1994" name="FEBS Lett.">
        <title>Stereochemistry of the hydrolysis of glycosidic linkage by endo-beta-1,4-xylanases of Trichoderma reesei.</title>
        <authorList>
            <person name="Biely P."/>
            <person name="Kremnicky L."/>
            <person name="Alfoeldi J."/>
            <person name="Tenkanen M."/>
        </authorList>
    </citation>
    <scope>FUNCTION</scope>
</reference>
<reference key="7">
    <citation type="journal article" date="2007" name="Anal. Biochem.">
        <title>Determination of steady-state kinetic parameters for a xylanase-catalyzed hydrolysis of neutral underivatized xylooligosaccharides by mass spectrometry.</title>
        <authorList>
            <person name="Jaenis J."/>
            <person name="Pulkkinen P."/>
            <person name="Rouvinen J."/>
            <person name="Vainiotalo P."/>
        </authorList>
    </citation>
    <scope>BIOPHYSICOCHEMICAL PROPERTIES</scope>
    <scope>SUBSTRATE SPECIFICITY</scope>
    <source>
        <strain>ATCC 56765 / BCRC 32924 / NRRL 11460 / Rut C-30</strain>
    </source>
</reference>
<reference key="8">
    <citation type="journal article" date="1994" name="EMBO J.">
        <title>Three-dimensional structure of endo-1,4-beta-xylanase II from Trichoderma reesei: two conformational states in the active site.</title>
        <authorList>
            <person name="Toerroenen A."/>
            <person name="Harkki A."/>
            <person name="Rouvinen J."/>
        </authorList>
    </citation>
    <scope>X-RAY CRYSTALLOGRAPHY (1.8 ANGSTROMS)</scope>
    <source>
        <strain>ATCC 56765 / BCRC 32924 / NRRL 11460 / Rut C-30</strain>
    </source>
</reference>
<reference key="9">
    <citation type="journal article" date="1995" name="Biochemistry">
        <title>Structural comparison of two major endo-1,4-xylanases from Trichoderma reesei.</title>
        <authorList>
            <person name="Toerroenen A."/>
            <person name="Rouvinen J."/>
        </authorList>
    </citation>
    <scope>X-RAY CRYSTALLOGRAPHY (1.5 ANGSTROMS)</scope>
    <source>
        <strain>ATCC 56765 / BCRC 32924 / NRRL 11460 / Rut C-30</strain>
    </source>
</reference>
<reference key="10">
    <citation type="journal article" date="1996" name="Biochemistry">
        <title>Covalent binding of three epoxyalkyl xylosides to the active site of endo-1,4-xylanase II from Trichoderma reesei.</title>
        <authorList>
            <person name="Havukainen R."/>
            <person name="Toerroenen A."/>
            <person name="Laitinen T."/>
            <person name="Rouvinen J."/>
        </authorList>
    </citation>
    <scope>X-RAY CRYSTALLOGRAPHY (1.6 ANGSTROMS)</scope>
    <source>
        <strain>ATCC 56765 / BCRC 32924 / NRRL 11460 / Rut C-30</strain>
    </source>
</reference>
<reference key="11">
    <citation type="journal article" date="2006" name="Acta Crystallogr. D">
        <title>Structure of an orthorhombic form of xylanase II from Trichoderma reesei and analysis of thermal displacement.</title>
        <authorList>
            <person name="Watanabe N."/>
            <person name="Akiba T."/>
            <person name="Kanai R."/>
            <person name="Harata K."/>
        </authorList>
    </citation>
    <scope>X-RAY CRYSTALLOGRAPHY (1.11 ANGSTROMS)</scope>
    <scope>PYROGLUTAMATE FORMATION AT GLN-34</scope>
</reference>
<reference key="12">
    <citation type="journal article" date="2014" name="Acta Crystallogr. D">
        <title>X-ray crystallographic studies of family 11 xylanase Michaelis and product complexes: implications for the catalytic mechanism.</title>
        <authorList>
            <person name="Wan Q."/>
            <person name="Zhang Q."/>
            <person name="Hamilton-Brehm S."/>
            <person name="Weiss K."/>
            <person name="Mustyakimov M."/>
            <person name="Coates L."/>
            <person name="Langan P."/>
            <person name="Graham D."/>
            <person name="Kovalevsky A."/>
        </authorList>
    </citation>
    <scope>X-RAY CRYSTALLOGRAPHY (1.10 ANGSTROMS) IN COMPLEX WITH SUBSTRATE</scope>
</reference>
<reference key="13">
    <citation type="journal article" date="2015" name="Proc. Natl. Acad. Sci. U.S.A.">
        <title>Direct determination of protonation states and visualization of hydrogen bonding in a glycoside hydrolase with neutron crystallography.</title>
        <authorList>
            <person name="Wan Q."/>
            <person name="Parks J.M."/>
            <person name="Hanson B.L."/>
            <person name="Fisher S.Z."/>
            <person name="Ostermann A."/>
            <person name="Schrader T.E."/>
            <person name="Graham D.E."/>
            <person name="Coates L."/>
            <person name="Langan P."/>
            <person name="Kovalevsky A."/>
        </authorList>
    </citation>
    <scope>X-RAY CRYSTALLOGRAPHY (1.10 ANGSTROMS)</scope>
    <scope>ACTIVE SITES</scope>
</reference>
<gene>
    <name evidence="13" type="primary">xyn2</name>
    <name type="ORF">M419DRAFT_124931</name>
</gene>